<reference key="1">
    <citation type="journal article" date="2001" name="Nature">
        <title>Massive gene decay in the leprosy bacillus.</title>
        <authorList>
            <person name="Cole S.T."/>
            <person name="Eiglmeier K."/>
            <person name="Parkhill J."/>
            <person name="James K.D."/>
            <person name="Thomson N.R."/>
            <person name="Wheeler P.R."/>
            <person name="Honore N."/>
            <person name="Garnier T."/>
            <person name="Churcher C.M."/>
            <person name="Harris D.E."/>
            <person name="Mungall K.L."/>
            <person name="Basham D."/>
            <person name="Brown D."/>
            <person name="Chillingworth T."/>
            <person name="Connor R."/>
            <person name="Davies R.M."/>
            <person name="Devlin K."/>
            <person name="Duthoy S."/>
            <person name="Feltwell T."/>
            <person name="Fraser A."/>
            <person name="Hamlin N."/>
            <person name="Holroyd S."/>
            <person name="Hornsby T."/>
            <person name="Jagels K."/>
            <person name="Lacroix C."/>
            <person name="Maclean J."/>
            <person name="Moule S."/>
            <person name="Murphy L.D."/>
            <person name="Oliver K."/>
            <person name="Quail M.A."/>
            <person name="Rajandream M.A."/>
            <person name="Rutherford K.M."/>
            <person name="Rutter S."/>
            <person name="Seeger K."/>
            <person name="Simon S."/>
            <person name="Simmonds M."/>
            <person name="Skelton J."/>
            <person name="Squares R."/>
            <person name="Squares S."/>
            <person name="Stevens K."/>
            <person name="Taylor K."/>
            <person name="Whitehead S."/>
            <person name="Woodward J.R."/>
            <person name="Barrell B.G."/>
        </authorList>
    </citation>
    <scope>NUCLEOTIDE SEQUENCE [LARGE SCALE GENOMIC DNA]</scope>
    <source>
        <strain>TN</strain>
    </source>
</reference>
<dbReference type="EMBL" id="AL583923">
    <property type="protein sequence ID" value="CAC30850.1"/>
    <property type="molecule type" value="Genomic_DNA"/>
</dbReference>
<dbReference type="PIR" id="B87146">
    <property type="entry name" value="B87146"/>
</dbReference>
<dbReference type="RefSeq" id="NP_302276.1">
    <property type="nucleotide sequence ID" value="NC_002677.1"/>
</dbReference>
<dbReference type="RefSeq" id="WP_010908597.1">
    <property type="nucleotide sequence ID" value="NC_002677.1"/>
</dbReference>
<dbReference type="SMR" id="Q9CBK7"/>
<dbReference type="STRING" id="272631.gene:17575744"/>
<dbReference type="KEGG" id="mle:ML1896"/>
<dbReference type="PATRIC" id="fig|272631.5.peg.3593"/>
<dbReference type="Leproma" id="ML1896"/>
<dbReference type="eggNOG" id="COG0244">
    <property type="taxonomic scope" value="Bacteria"/>
</dbReference>
<dbReference type="HOGENOM" id="CLU_092227_1_0_11"/>
<dbReference type="OrthoDB" id="3186107at2"/>
<dbReference type="Proteomes" id="UP000000806">
    <property type="component" value="Chromosome"/>
</dbReference>
<dbReference type="GO" id="GO:0015934">
    <property type="term" value="C:large ribosomal subunit"/>
    <property type="evidence" value="ECO:0007669"/>
    <property type="project" value="InterPro"/>
</dbReference>
<dbReference type="GO" id="GO:0070180">
    <property type="term" value="F:large ribosomal subunit rRNA binding"/>
    <property type="evidence" value="ECO:0007669"/>
    <property type="project" value="UniProtKB-UniRule"/>
</dbReference>
<dbReference type="GO" id="GO:0003735">
    <property type="term" value="F:structural constituent of ribosome"/>
    <property type="evidence" value="ECO:0007669"/>
    <property type="project" value="InterPro"/>
</dbReference>
<dbReference type="GO" id="GO:0006412">
    <property type="term" value="P:translation"/>
    <property type="evidence" value="ECO:0007669"/>
    <property type="project" value="UniProtKB-UniRule"/>
</dbReference>
<dbReference type="CDD" id="cd05797">
    <property type="entry name" value="Ribosomal_L10"/>
    <property type="match status" value="1"/>
</dbReference>
<dbReference type="FunFam" id="3.30.70.1730:FF:000003">
    <property type="entry name" value="50S ribosomal protein L10"/>
    <property type="match status" value="1"/>
</dbReference>
<dbReference type="Gene3D" id="3.30.70.1730">
    <property type="match status" value="1"/>
</dbReference>
<dbReference type="Gene3D" id="6.10.250.290">
    <property type="match status" value="1"/>
</dbReference>
<dbReference type="HAMAP" id="MF_00362">
    <property type="entry name" value="Ribosomal_uL10"/>
    <property type="match status" value="1"/>
</dbReference>
<dbReference type="InterPro" id="IPR001790">
    <property type="entry name" value="Ribosomal_uL10"/>
</dbReference>
<dbReference type="InterPro" id="IPR043141">
    <property type="entry name" value="Ribosomal_uL10-like_sf"/>
</dbReference>
<dbReference type="InterPro" id="IPR022973">
    <property type="entry name" value="Ribosomal_uL10_bac"/>
</dbReference>
<dbReference type="InterPro" id="IPR047865">
    <property type="entry name" value="Ribosomal_uL10_bac_type"/>
</dbReference>
<dbReference type="InterPro" id="IPR002363">
    <property type="entry name" value="Ribosomal_uL10_CS_bac"/>
</dbReference>
<dbReference type="NCBIfam" id="NF000955">
    <property type="entry name" value="PRK00099.1-1"/>
    <property type="match status" value="1"/>
</dbReference>
<dbReference type="PANTHER" id="PTHR11560">
    <property type="entry name" value="39S RIBOSOMAL PROTEIN L10, MITOCHONDRIAL"/>
    <property type="match status" value="1"/>
</dbReference>
<dbReference type="Pfam" id="PF00466">
    <property type="entry name" value="Ribosomal_L10"/>
    <property type="match status" value="1"/>
</dbReference>
<dbReference type="SUPFAM" id="SSF160369">
    <property type="entry name" value="Ribosomal protein L10-like"/>
    <property type="match status" value="1"/>
</dbReference>
<dbReference type="PROSITE" id="PS01109">
    <property type="entry name" value="RIBOSOMAL_L10"/>
    <property type="match status" value="1"/>
</dbReference>
<gene>
    <name type="primary">rplJ</name>
    <name type="ordered locus">ML1896</name>
</gene>
<organism>
    <name type="scientific">Mycobacterium leprae (strain TN)</name>
    <dbReference type="NCBI Taxonomy" id="272631"/>
    <lineage>
        <taxon>Bacteria</taxon>
        <taxon>Bacillati</taxon>
        <taxon>Actinomycetota</taxon>
        <taxon>Actinomycetes</taxon>
        <taxon>Mycobacteriales</taxon>
        <taxon>Mycobacteriaceae</taxon>
        <taxon>Mycobacterium</taxon>
    </lineage>
</organism>
<accession>Q9CBK7</accession>
<feature type="chain" id="PRO_0000154667" description="Large ribosomal subunit protein uL10">
    <location>
        <begin position="1"/>
        <end position="177"/>
    </location>
</feature>
<name>RL10_MYCLE</name>
<sequence>MARADKATAVANIAEQFKAATAALITEYRGLTVANLAELRRSLTGSASYAVAKNTLIKRAASEVGIEGLDELFAGPTAIAFVTGEPVDAAKAIKTFAKEHKALVIKGGYMDGHPMTVAEVERIADLESREVLLAKLAGAMKGTFAKAIGLFNAPTSQMARLTAALQEKKAFEPASAE</sequence>
<protein>
    <recommendedName>
        <fullName evidence="2">Large ribosomal subunit protein uL10</fullName>
    </recommendedName>
    <alternativeName>
        <fullName>50S ribosomal protein L10</fullName>
    </alternativeName>
</protein>
<proteinExistence type="inferred from homology"/>
<comment type="function">
    <text evidence="1">Forms part of the ribosomal stalk, playing a central role in the interaction of the ribosome with GTP-bound translation factors.</text>
</comment>
<comment type="subunit">
    <text evidence="1">Part of the ribosomal stalk of the 50S ribosomal subunit. The N-terminus interacts with L11 and the large rRNA to form the base of the stalk. The C-terminus forms an elongated spine to which L12 dimers bind in a sequential fashion forming a multimeric L10(L12)X complex (By similarity).</text>
</comment>
<comment type="similarity">
    <text evidence="2">Belongs to the universal ribosomal protein uL10 family.</text>
</comment>
<evidence type="ECO:0000250" key="1"/>
<evidence type="ECO:0000305" key="2"/>
<keyword id="KW-1185">Reference proteome</keyword>
<keyword id="KW-0687">Ribonucleoprotein</keyword>
<keyword id="KW-0689">Ribosomal protein</keyword>
<keyword id="KW-0694">RNA-binding</keyword>
<keyword id="KW-0699">rRNA-binding</keyword>